<feature type="chain" id="PRO_0000255155" description="Cytochrome b">
    <location>
        <begin position="1"/>
        <end position="380"/>
    </location>
</feature>
<feature type="transmembrane region" description="Helical" evidence="2">
    <location>
        <begin position="33"/>
        <end position="53"/>
    </location>
</feature>
<feature type="transmembrane region" description="Helical" evidence="2">
    <location>
        <begin position="77"/>
        <end position="98"/>
    </location>
</feature>
<feature type="transmembrane region" description="Helical" evidence="2">
    <location>
        <begin position="113"/>
        <end position="133"/>
    </location>
</feature>
<feature type="transmembrane region" description="Helical" evidence="2">
    <location>
        <begin position="178"/>
        <end position="198"/>
    </location>
</feature>
<feature type="transmembrane region" description="Helical" evidence="2">
    <location>
        <begin position="226"/>
        <end position="246"/>
    </location>
</feature>
<feature type="transmembrane region" description="Helical" evidence="2">
    <location>
        <begin position="288"/>
        <end position="308"/>
    </location>
</feature>
<feature type="transmembrane region" description="Helical" evidence="2">
    <location>
        <begin position="320"/>
        <end position="340"/>
    </location>
</feature>
<feature type="transmembrane region" description="Helical" evidence="2">
    <location>
        <begin position="347"/>
        <end position="367"/>
    </location>
</feature>
<feature type="binding site" description="axial binding residue" evidence="2">
    <location>
        <position position="83"/>
    </location>
    <ligand>
        <name>heme b</name>
        <dbReference type="ChEBI" id="CHEBI:60344"/>
        <label>b562</label>
    </ligand>
    <ligandPart>
        <name>Fe</name>
        <dbReference type="ChEBI" id="CHEBI:18248"/>
    </ligandPart>
</feature>
<feature type="binding site" description="axial binding residue" evidence="2">
    <location>
        <position position="97"/>
    </location>
    <ligand>
        <name>heme b</name>
        <dbReference type="ChEBI" id="CHEBI:60344"/>
        <label>b566</label>
    </ligand>
    <ligandPart>
        <name>Fe</name>
        <dbReference type="ChEBI" id="CHEBI:18248"/>
    </ligandPart>
</feature>
<feature type="binding site" description="axial binding residue" evidence="2">
    <location>
        <position position="182"/>
    </location>
    <ligand>
        <name>heme b</name>
        <dbReference type="ChEBI" id="CHEBI:60344"/>
        <label>b562</label>
    </ligand>
    <ligandPart>
        <name>Fe</name>
        <dbReference type="ChEBI" id="CHEBI:18248"/>
    </ligandPart>
</feature>
<feature type="binding site" description="axial binding residue" evidence="2">
    <location>
        <position position="196"/>
    </location>
    <ligand>
        <name>heme b</name>
        <dbReference type="ChEBI" id="CHEBI:60344"/>
        <label>b566</label>
    </ligand>
    <ligandPart>
        <name>Fe</name>
        <dbReference type="ChEBI" id="CHEBI:18248"/>
    </ligandPart>
</feature>
<feature type="binding site" evidence="2">
    <location>
        <position position="201"/>
    </location>
    <ligand>
        <name>a ubiquinone</name>
        <dbReference type="ChEBI" id="CHEBI:16389"/>
    </ligand>
</feature>
<evidence type="ECO:0000250" key="1"/>
<evidence type="ECO:0000250" key="2">
    <source>
        <dbReference type="UniProtKB" id="P00157"/>
    </source>
</evidence>
<evidence type="ECO:0000255" key="3">
    <source>
        <dbReference type="PROSITE-ProRule" id="PRU00967"/>
    </source>
</evidence>
<evidence type="ECO:0000255" key="4">
    <source>
        <dbReference type="PROSITE-ProRule" id="PRU00968"/>
    </source>
</evidence>
<keyword id="KW-0249">Electron transport</keyword>
<keyword id="KW-0349">Heme</keyword>
<keyword id="KW-0408">Iron</keyword>
<keyword id="KW-0472">Membrane</keyword>
<keyword id="KW-0479">Metal-binding</keyword>
<keyword id="KW-0496">Mitochondrion</keyword>
<keyword id="KW-0999">Mitochondrion inner membrane</keyword>
<keyword id="KW-0679">Respiratory chain</keyword>
<keyword id="KW-0812">Transmembrane</keyword>
<keyword id="KW-1133">Transmembrane helix</keyword>
<keyword id="KW-0813">Transport</keyword>
<keyword id="KW-0830">Ubiquinone</keyword>
<geneLocation type="mitochondrion"/>
<comment type="function">
    <text evidence="2">Component of the ubiquinol-cytochrome c reductase complex (complex III or cytochrome b-c1 complex) that is part of the mitochondrial respiratory chain. The b-c1 complex mediates electron transfer from ubiquinol to cytochrome c. Contributes to the generation of a proton gradient across the mitochondrial membrane that is then used for ATP synthesis.</text>
</comment>
<comment type="cofactor">
    <cofactor evidence="2">
        <name>heme b</name>
        <dbReference type="ChEBI" id="CHEBI:60344"/>
    </cofactor>
    <text evidence="2">Binds 2 heme b groups non-covalently.</text>
</comment>
<comment type="subunit">
    <text evidence="2">The cytochrome bc1 complex contains 11 subunits: 3 respiratory subunits (MT-CYB, CYC1 and UQCRFS1), 2 core proteins (UQCRC1 and UQCRC2) and 6 low-molecular weight proteins (UQCRH/QCR6, UQCRB/QCR7, UQCRQ/QCR8, UQCR10/QCR9, UQCR11/QCR10 and a cleavage product of UQCRFS1). This cytochrome bc1 complex then forms a dimer.</text>
</comment>
<comment type="subcellular location">
    <subcellularLocation>
        <location evidence="2">Mitochondrion inner membrane</location>
        <topology evidence="2">Multi-pass membrane protein</topology>
    </subcellularLocation>
</comment>
<comment type="miscellaneous">
    <text evidence="1">Heme 1 (or BL or b562) is low-potential and absorbs at about 562 nm, and heme 2 (or BH or b566) is high-potential and absorbs at about 566 nm.</text>
</comment>
<comment type="similarity">
    <text evidence="3 4">Belongs to the cytochrome b family.</text>
</comment>
<comment type="caution">
    <text evidence="2">The full-length protein contains only eight transmembrane helices, not nine as predicted by bioinformatics tools.</text>
</comment>
<gene>
    <name type="primary">MT-CYB</name>
    <name type="synonym">COB</name>
    <name type="synonym">CYTB</name>
    <name type="synonym">MTCYB</name>
</gene>
<name>CYB_VOAGY</name>
<proteinExistence type="inferred from homology"/>
<sequence length="380" mass="42913">MTNIRKTHPLLKIINHSFIDLPAPSNISSWWNFGSLLGICLMLQIITGLFLAMHYTSDTTTAFSSVTHICRDVNYGWLIRYLHANGASMFFICLFIHVGRGMYYGSYMSIETWNMGIILLFAVMATAFMGYVLPWGQMSFWGATVITNLLSAIPYIGTTLVEWIWGGFSVDKATLTRFFAFHFILPFIIVALVMVHLLFLHETGSNNPSGLNSDADKIPFHPYYTIKDILGIFLLLLFLMSLVLFTPDLLGDPDNYTPANPLNTPPHIKPEWYFLFAYAILRSIPNKLGGVLALILSILVLALLPHLHTSKQQSLMFRPLTQTLYWILVADLLTLTWIGGQPVEYPFIIIGQLASILYFVTILILMPMAGMIEDNILKMT</sequence>
<organism>
    <name type="scientific">Voalavo gymnocaudus</name>
    <dbReference type="NCBI Taxonomy" id="108517"/>
    <lineage>
        <taxon>Eukaryota</taxon>
        <taxon>Metazoa</taxon>
        <taxon>Chordata</taxon>
        <taxon>Craniata</taxon>
        <taxon>Vertebrata</taxon>
        <taxon>Euteleostomi</taxon>
        <taxon>Mammalia</taxon>
        <taxon>Eutheria</taxon>
        <taxon>Euarchontoglires</taxon>
        <taxon>Glires</taxon>
        <taxon>Rodentia</taxon>
        <taxon>Myomorpha</taxon>
        <taxon>Muroidea</taxon>
        <taxon>Nesomyidae</taxon>
        <taxon>Nesomyinae</taxon>
        <taxon>Voalavo</taxon>
    </lineage>
</organism>
<protein>
    <recommendedName>
        <fullName>Cytochrome b</fullName>
    </recommendedName>
    <alternativeName>
        <fullName>Complex III subunit 3</fullName>
    </alternativeName>
    <alternativeName>
        <fullName>Complex III subunit III</fullName>
    </alternativeName>
    <alternativeName>
        <fullName>Cytochrome b-c1 complex subunit 3</fullName>
    </alternativeName>
    <alternativeName>
        <fullName>Ubiquinol-cytochrome-c reductase complex cytochrome b subunit</fullName>
    </alternativeName>
</protein>
<reference key="1">
    <citation type="journal article" date="1999" name="Cladistics">
        <title>Molecular phylogeny and biogeography of Madagascar's native rodents (Muridae: Nesomyinae): a test of the single origin hypothesis.</title>
        <authorList>
            <person name="Jansa S.A."/>
            <person name="Goodman S.M."/>
            <person name="Tucker P.K."/>
        </authorList>
    </citation>
    <scope>NUCLEOTIDE SEQUENCE [GENOMIC DNA]</scope>
</reference>
<accession>Q9T4A7</accession>
<dbReference type="EMBL" id="AF160596">
    <property type="protein sequence ID" value="AAF15212.1"/>
    <property type="molecule type" value="Genomic_DNA"/>
</dbReference>
<dbReference type="EMBL" id="AF160597">
    <property type="protein sequence ID" value="AAF15213.1"/>
    <property type="molecule type" value="Genomic_DNA"/>
</dbReference>
<dbReference type="SMR" id="Q9T4A7"/>
<dbReference type="GO" id="GO:0005743">
    <property type="term" value="C:mitochondrial inner membrane"/>
    <property type="evidence" value="ECO:0007669"/>
    <property type="project" value="UniProtKB-SubCell"/>
</dbReference>
<dbReference type="GO" id="GO:0045275">
    <property type="term" value="C:respiratory chain complex III"/>
    <property type="evidence" value="ECO:0007669"/>
    <property type="project" value="InterPro"/>
</dbReference>
<dbReference type="GO" id="GO:0046872">
    <property type="term" value="F:metal ion binding"/>
    <property type="evidence" value="ECO:0007669"/>
    <property type="project" value="UniProtKB-KW"/>
</dbReference>
<dbReference type="GO" id="GO:0008121">
    <property type="term" value="F:ubiquinol-cytochrome-c reductase activity"/>
    <property type="evidence" value="ECO:0007669"/>
    <property type="project" value="InterPro"/>
</dbReference>
<dbReference type="GO" id="GO:0006122">
    <property type="term" value="P:mitochondrial electron transport, ubiquinol to cytochrome c"/>
    <property type="evidence" value="ECO:0007669"/>
    <property type="project" value="TreeGrafter"/>
</dbReference>
<dbReference type="CDD" id="cd00290">
    <property type="entry name" value="cytochrome_b_C"/>
    <property type="match status" value="1"/>
</dbReference>
<dbReference type="CDD" id="cd00284">
    <property type="entry name" value="Cytochrome_b_N"/>
    <property type="match status" value="1"/>
</dbReference>
<dbReference type="FunFam" id="1.20.810.10:FF:000002">
    <property type="entry name" value="Cytochrome b"/>
    <property type="match status" value="1"/>
</dbReference>
<dbReference type="Gene3D" id="1.20.810.10">
    <property type="entry name" value="Cytochrome Bc1 Complex, Chain C"/>
    <property type="match status" value="1"/>
</dbReference>
<dbReference type="InterPro" id="IPR005798">
    <property type="entry name" value="Cyt_b/b6_C"/>
</dbReference>
<dbReference type="InterPro" id="IPR036150">
    <property type="entry name" value="Cyt_b/b6_C_sf"/>
</dbReference>
<dbReference type="InterPro" id="IPR005797">
    <property type="entry name" value="Cyt_b/b6_N"/>
</dbReference>
<dbReference type="InterPro" id="IPR027387">
    <property type="entry name" value="Cytb/b6-like_sf"/>
</dbReference>
<dbReference type="InterPro" id="IPR030689">
    <property type="entry name" value="Cytochrome_b"/>
</dbReference>
<dbReference type="InterPro" id="IPR048260">
    <property type="entry name" value="Cytochrome_b_C_euk/bac"/>
</dbReference>
<dbReference type="InterPro" id="IPR048259">
    <property type="entry name" value="Cytochrome_b_N_euk/bac"/>
</dbReference>
<dbReference type="InterPro" id="IPR016174">
    <property type="entry name" value="Di-haem_cyt_TM"/>
</dbReference>
<dbReference type="PANTHER" id="PTHR19271">
    <property type="entry name" value="CYTOCHROME B"/>
    <property type="match status" value="1"/>
</dbReference>
<dbReference type="PANTHER" id="PTHR19271:SF16">
    <property type="entry name" value="CYTOCHROME B"/>
    <property type="match status" value="1"/>
</dbReference>
<dbReference type="Pfam" id="PF00032">
    <property type="entry name" value="Cytochrom_B_C"/>
    <property type="match status" value="1"/>
</dbReference>
<dbReference type="Pfam" id="PF00033">
    <property type="entry name" value="Cytochrome_B"/>
    <property type="match status" value="1"/>
</dbReference>
<dbReference type="PIRSF" id="PIRSF038885">
    <property type="entry name" value="COB"/>
    <property type="match status" value="1"/>
</dbReference>
<dbReference type="SUPFAM" id="SSF81648">
    <property type="entry name" value="a domain/subunit of cytochrome bc1 complex (Ubiquinol-cytochrome c reductase)"/>
    <property type="match status" value="1"/>
</dbReference>
<dbReference type="SUPFAM" id="SSF81342">
    <property type="entry name" value="Transmembrane di-heme cytochromes"/>
    <property type="match status" value="1"/>
</dbReference>
<dbReference type="PROSITE" id="PS51003">
    <property type="entry name" value="CYTB_CTER"/>
    <property type="match status" value="1"/>
</dbReference>
<dbReference type="PROSITE" id="PS51002">
    <property type="entry name" value="CYTB_NTER"/>
    <property type="match status" value="1"/>
</dbReference>